<keyword id="KW-0040">ANK repeat</keyword>
<keyword id="KW-0963">Cytoplasm</keyword>
<keyword id="KW-0217">Developmental protein</keyword>
<keyword id="KW-0221">Differentiation</keyword>
<keyword id="KW-0469">Meiosis</keyword>
<keyword id="KW-0597">Phosphoprotein</keyword>
<keyword id="KW-0677">Repeat</keyword>
<keyword id="KW-0943">RNA-mediated gene silencing</keyword>
<keyword id="KW-0744">Spermatogenesis</keyword>
<organism>
    <name type="scientific">Atelerix albiventris</name>
    <name type="common">Middle-African hedgehog</name>
    <name type="synonym">Four-toed hedgehog</name>
    <dbReference type="NCBI Taxonomy" id="9368"/>
    <lineage>
        <taxon>Eukaryota</taxon>
        <taxon>Metazoa</taxon>
        <taxon>Chordata</taxon>
        <taxon>Craniata</taxon>
        <taxon>Vertebrata</taxon>
        <taxon>Euteleostomi</taxon>
        <taxon>Mammalia</taxon>
        <taxon>Eutheria</taxon>
        <taxon>Laurasiatheria</taxon>
        <taxon>Eulipotyphla</taxon>
        <taxon>Erinaceidae</taxon>
        <taxon>Erinaceinae</taxon>
        <taxon>Atelerix</taxon>
    </lineage>
</organism>
<accession>Q00PJ3</accession>
<comment type="function">
    <text evidence="1">Plays a central role during spermatogenesis by repressing transposable elements and preventing their mobilization, which is essential for the germline integrity. Acts via the piRNA metabolic process, which mediates the repression of transposable elements during meiosis by forming complexes composed of piRNAs and Piwi proteins and governs the methylation and subsequent repression of transposons. Its association with pi-bodies suggests a participation in the primary piRNAs metabolic process. Required prior to the pachytene stage to facilitate the production of multiple types of piRNAs, including those associated with repeats involved in the regulation of retrotransposons. May act by mediating protein-protein interactions during germ cell maturation (By similarity).</text>
</comment>
<comment type="subunit">
    <text evidence="1">Interacts with DDX4, PIWIL1, RANBP9 and TDRD1.</text>
</comment>
<comment type="subcellular location">
    <subcellularLocation>
        <location evidence="1">Cytoplasm</location>
    </subcellularLocation>
    <text evidence="1">Component of the meiotic nuage, also named P granule, a germ-cell-specific organelle required to repress transposon activity during meiosis. Specifically localizes to pi-bodies, a subset of the nuage which contains primary piRNAs (By similarity).</text>
</comment>
<reference key="1">
    <citation type="submission" date="2006-10" db="EMBL/GenBank/DDBJ databases">
        <title>NISC comparative sequencing initiative.</title>
        <authorList>
            <person name="Antonellis A."/>
            <person name="Ayele K."/>
            <person name="Benjamin B."/>
            <person name="Blakesley R.W."/>
            <person name="Boakye A."/>
            <person name="Bouffard G.G."/>
            <person name="Brinkley C."/>
            <person name="Brooks S."/>
            <person name="Chu G."/>
            <person name="Coleman H."/>
            <person name="Engle J."/>
            <person name="Gestole M."/>
            <person name="Greene A."/>
            <person name="Guan X."/>
            <person name="Gupta J."/>
            <person name="Haghighi P."/>
            <person name="Han J."/>
            <person name="Hansen N."/>
            <person name="Ho S.-L."/>
            <person name="Hu P."/>
            <person name="Hunter G."/>
            <person name="Hurle B."/>
            <person name="Idol J.R."/>
            <person name="Kwong P."/>
            <person name="Laric P."/>
            <person name="Larson S."/>
            <person name="Lee-Lin S.-Q."/>
            <person name="Legaspi R."/>
            <person name="Madden M."/>
            <person name="Maduro Q.L."/>
            <person name="Maduro V.B."/>
            <person name="Margulies E.H."/>
            <person name="Masiello C."/>
            <person name="Maskeri B."/>
            <person name="McDowell J."/>
            <person name="Mojidi H.A."/>
            <person name="Mullikin J.C."/>
            <person name="Oestreicher J.S."/>
            <person name="Park M."/>
            <person name="Portnoy M.E."/>
            <person name="Prasad A."/>
            <person name="Puri O."/>
            <person name="Reddix-Dugue N."/>
            <person name="Schandler K."/>
            <person name="Schueler M.G."/>
            <person name="Sison C."/>
            <person name="Stantripop S."/>
            <person name="Stephen E."/>
            <person name="Taye A."/>
            <person name="Thomas J.W."/>
            <person name="Thomas P.J."/>
            <person name="Tsipouri V."/>
            <person name="Ung L."/>
            <person name="Vogt J.L."/>
            <person name="Wetherby K.D."/>
            <person name="Young A."/>
            <person name="Green E.D."/>
        </authorList>
    </citation>
    <scope>NUCLEOTIDE SEQUENCE [LARGE SCALE GENOMIC DNA]</scope>
</reference>
<feature type="chain" id="PRO_0000274181" description="Ankyrin repeat, SAM and basic leucine zipper domain-containing protein 1">
    <location>
        <begin position="1"/>
        <end position="475"/>
    </location>
</feature>
<feature type="repeat" description="ANK 1">
    <location>
        <begin position="45"/>
        <end position="74"/>
    </location>
</feature>
<feature type="repeat" description="ANK 2">
    <location>
        <begin position="78"/>
        <end position="107"/>
    </location>
</feature>
<feature type="repeat" description="ANK 3">
    <location>
        <begin position="110"/>
        <end position="144"/>
    </location>
</feature>
<feature type="repeat" description="ANK 4">
    <location>
        <begin position="148"/>
        <end position="177"/>
    </location>
</feature>
<feature type="repeat" description="ANK 5">
    <location>
        <begin position="181"/>
        <end position="210"/>
    </location>
</feature>
<feature type="repeat" description="ANK 6">
    <location>
        <begin position="214"/>
        <end position="243"/>
    </location>
</feature>
<feature type="domain" description="SAM">
    <location>
        <begin position="272"/>
        <end position="334"/>
    </location>
</feature>
<feature type="modified residue" description="Phosphoserine" evidence="2">
    <location>
        <position position="17"/>
    </location>
</feature>
<feature type="modified residue" description="Phosphoserine" evidence="2">
    <location>
        <position position="18"/>
    </location>
</feature>
<feature type="modified residue" description="Phosphoserine" evidence="2">
    <location>
        <position position="20"/>
    </location>
</feature>
<sequence>MAAGAMRGLAVAGGGESSDSDDDGWEIGYLDRAAQKLRGPLPTEEKNETFKKALTTGDISLVQELLDSGISVDTSFRYGWTPLMYAANVANVEMVQVLLDRGANASFSKDKQTILISACSARGTEEQILKCVDLLLSRNADPNMACRRLMTPVMYAARNGHPQVVALLVAHGADVNAQDENGYTALTWAARQGHKHVVLKLLELGANKMIQTKDGKTPSEIAKRNKHVEIFNFLSLTLNPLEGKLQQLTKEETICKLLTTESDKEKDHIFSSYTAFGDLEIFLHGLGLEHMTDLLKERDITLRHLLTMRKDEFAKNGITSRDQQKILAALKELEVEEIKFGELPEVAKLEISGDEFLNFLLKLSKQCGHLITAVQNIITELPVNSHKIVLEWASPRNFTSVCEELVSNVEDLSEEVCKLKDLIQKLQNERENDPTQIPLIEEVSTWNSRILKRTAITVCGFGFVLFICKLTLQRK</sequence>
<evidence type="ECO:0000250" key="1"/>
<evidence type="ECO:0000250" key="2">
    <source>
        <dbReference type="UniProtKB" id="Q8VD46"/>
    </source>
</evidence>
<protein>
    <recommendedName>
        <fullName>Ankyrin repeat, SAM and basic leucine zipper domain-containing protein 1</fullName>
    </recommendedName>
    <alternativeName>
        <fullName>Germ cell-specific ankyrin, SAM and basic leucine zipper domain-containing protein</fullName>
    </alternativeName>
</protein>
<dbReference type="EMBL" id="DP000003">
    <property type="protein sequence ID" value="AAY88984.1"/>
    <property type="molecule type" value="Genomic_DNA"/>
</dbReference>
<dbReference type="SMR" id="Q00PJ3"/>
<dbReference type="GO" id="GO:0071546">
    <property type="term" value="C:pi-body"/>
    <property type="evidence" value="ECO:0000250"/>
    <property type="project" value="UniProtKB"/>
</dbReference>
<dbReference type="GO" id="GO:0030154">
    <property type="term" value="P:cell differentiation"/>
    <property type="evidence" value="ECO:0007669"/>
    <property type="project" value="UniProtKB-KW"/>
</dbReference>
<dbReference type="GO" id="GO:0007140">
    <property type="term" value="P:male meiotic nuclear division"/>
    <property type="evidence" value="ECO:0000250"/>
    <property type="project" value="UniProtKB"/>
</dbReference>
<dbReference type="GO" id="GO:0031047">
    <property type="term" value="P:regulatory ncRNA-mediated gene silencing"/>
    <property type="evidence" value="ECO:0007669"/>
    <property type="project" value="UniProtKB-KW"/>
</dbReference>
<dbReference type="GO" id="GO:0007283">
    <property type="term" value="P:spermatogenesis"/>
    <property type="evidence" value="ECO:0000250"/>
    <property type="project" value="UniProtKB"/>
</dbReference>
<dbReference type="GO" id="GO:0010526">
    <property type="term" value="P:transposable element silencing"/>
    <property type="evidence" value="ECO:0000250"/>
    <property type="project" value="UniProtKB"/>
</dbReference>
<dbReference type="CDD" id="cd09521">
    <property type="entry name" value="SAM_ASZ1"/>
    <property type="match status" value="1"/>
</dbReference>
<dbReference type="FunFam" id="1.25.40.20:FF:000192">
    <property type="entry name" value="Ankyrin repeat, SAM and basic leucine zipper domain-containing 1"/>
    <property type="match status" value="1"/>
</dbReference>
<dbReference type="FunFam" id="1.10.150.50:FF:000060">
    <property type="entry name" value="Ankyrin repeat, SAM and basic leucine zipper domain-containing protein 1"/>
    <property type="match status" value="1"/>
</dbReference>
<dbReference type="Gene3D" id="1.25.40.20">
    <property type="entry name" value="Ankyrin repeat-containing domain"/>
    <property type="match status" value="2"/>
</dbReference>
<dbReference type="Gene3D" id="1.10.150.50">
    <property type="entry name" value="Transcription Factor, Ets-1"/>
    <property type="match status" value="1"/>
</dbReference>
<dbReference type="InterPro" id="IPR002110">
    <property type="entry name" value="Ankyrin_rpt"/>
</dbReference>
<dbReference type="InterPro" id="IPR036770">
    <property type="entry name" value="Ankyrin_rpt-contain_sf"/>
</dbReference>
<dbReference type="InterPro" id="IPR042650">
    <property type="entry name" value="Asz1_SAM"/>
</dbReference>
<dbReference type="InterPro" id="IPR001660">
    <property type="entry name" value="SAM"/>
</dbReference>
<dbReference type="InterPro" id="IPR013761">
    <property type="entry name" value="SAM/pointed_sf"/>
</dbReference>
<dbReference type="PANTHER" id="PTHR24157">
    <property type="entry name" value="ANKYRIN REPEAT, SAM AND BASIC LEUCINE ZIPPER DOMAIN-CONTAINING PROTEIN 1"/>
    <property type="match status" value="1"/>
</dbReference>
<dbReference type="PANTHER" id="PTHR24157:SF3">
    <property type="entry name" value="ANKYRIN REPEAT, SAM AND BASIC LEUCINE ZIPPER DOMAIN-CONTAINING PROTEIN 1"/>
    <property type="match status" value="1"/>
</dbReference>
<dbReference type="Pfam" id="PF12796">
    <property type="entry name" value="Ank_2"/>
    <property type="match status" value="1"/>
</dbReference>
<dbReference type="Pfam" id="PF13637">
    <property type="entry name" value="Ank_4"/>
    <property type="match status" value="1"/>
</dbReference>
<dbReference type="Pfam" id="PF07647">
    <property type="entry name" value="SAM_2"/>
    <property type="match status" value="1"/>
</dbReference>
<dbReference type="PRINTS" id="PR01415">
    <property type="entry name" value="ANKYRIN"/>
</dbReference>
<dbReference type="SMART" id="SM00248">
    <property type="entry name" value="ANK"/>
    <property type="match status" value="5"/>
</dbReference>
<dbReference type="SUPFAM" id="SSF48403">
    <property type="entry name" value="Ankyrin repeat"/>
    <property type="match status" value="1"/>
</dbReference>
<dbReference type="SUPFAM" id="SSF140860">
    <property type="entry name" value="Pseudo ankyrin repeat-like"/>
    <property type="match status" value="1"/>
</dbReference>
<dbReference type="SUPFAM" id="SSF47769">
    <property type="entry name" value="SAM/Pointed domain"/>
    <property type="match status" value="1"/>
</dbReference>
<dbReference type="PROSITE" id="PS50297">
    <property type="entry name" value="ANK_REP_REGION"/>
    <property type="match status" value="1"/>
</dbReference>
<dbReference type="PROSITE" id="PS50088">
    <property type="entry name" value="ANK_REPEAT"/>
    <property type="match status" value="3"/>
</dbReference>
<gene>
    <name type="primary">ASZ1</name>
    <name type="synonym">GASZ</name>
</gene>
<name>ASZ1_ATEAB</name>
<proteinExistence type="inferred from homology"/>